<keyword id="KW-0342">GTP-binding</keyword>
<keyword id="KW-0547">Nucleotide-binding</keyword>
<keyword id="KW-1185">Reference proteome</keyword>
<keyword id="KW-0677">Repeat</keyword>
<keyword id="KW-0690">Ribosome biogenesis</keyword>
<organism>
    <name type="scientific">Oceanobacillus iheyensis (strain DSM 14371 / CIP 107618 / JCM 11309 / KCTC 3954 / HTE831)</name>
    <dbReference type="NCBI Taxonomy" id="221109"/>
    <lineage>
        <taxon>Bacteria</taxon>
        <taxon>Bacillati</taxon>
        <taxon>Bacillota</taxon>
        <taxon>Bacilli</taxon>
        <taxon>Bacillales</taxon>
        <taxon>Bacillaceae</taxon>
        <taxon>Oceanobacillus</taxon>
    </lineage>
</organism>
<accession>Q8EQA8</accession>
<name>DER_OCEIH</name>
<evidence type="ECO:0000255" key="1">
    <source>
        <dbReference type="HAMAP-Rule" id="MF_00195"/>
    </source>
</evidence>
<reference key="1">
    <citation type="journal article" date="2002" name="Nucleic Acids Res.">
        <title>Genome sequence of Oceanobacillus iheyensis isolated from the Iheya Ridge and its unexpected adaptive capabilities to extreme environments.</title>
        <authorList>
            <person name="Takami H."/>
            <person name="Takaki Y."/>
            <person name="Uchiyama I."/>
        </authorList>
    </citation>
    <scope>NUCLEOTIDE SEQUENCE [LARGE SCALE GENOMIC DNA]</scope>
    <source>
        <strain>DSM 14371 / CIP 107618 / JCM 11309 / KCTC 3954 / HTE831</strain>
    </source>
</reference>
<gene>
    <name evidence="1" type="primary">der</name>
    <name type="synonym">engA</name>
    <name type="ordered locus">OB1797</name>
</gene>
<feature type="chain" id="PRO_0000179023" description="GTPase Der">
    <location>
        <begin position="1"/>
        <end position="436"/>
    </location>
</feature>
<feature type="domain" description="EngA-type G 1">
    <location>
        <begin position="4"/>
        <end position="167"/>
    </location>
</feature>
<feature type="domain" description="EngA-type G 2">
    <location>
        <begin position="176"/>
        <end position="351"/>
    </location>
</feature>
<feature type="domain" description="KH-like" evidence="1">
    <location>
        <begin position="352"/>
        <end position="436"/>
    </location>
</feature>
<feature type="binding site" evidence="1">
    <location>
        <begin position="10"/>
        <end position="17"/>
    </location>
    <ligand>
        <name>GTP</name>
        <dbReference type="ChEBI" id="CHEBI:37565"/>
        <label>1</label>
    </ligand>
</feature>
<feature type="binding site" evidence="1">
    <location>
        <begin position="57"/>
        <end position="61"/>
    </location>
    <ligand>
        <name>GTP</name>
        <dbReference type="ChEBI" id="CHEBI:37565"/>
        <label>1</label>
    </ligand>
</feature>
<feature type="binding site" evidence="1">
    <location>
        <begin position="119"/>
        <end position="122"/>
    </location>
    <ligand>
        <name>GTP</name>
        <dbReference type="ChEBI" id="CHEBI:37565"/>
        <label>1</label>
    </ligand>
</feature>
<feature type="binding site" evidence="1">
    <location>
        <begin position="182"/>
        <end position="189"/>
    </location>
    <ligand>
        <name>GTP</name>
        <dbReference type="ChEBI" id="CHEBI:37565"/>
        <label>2</label>
    </ligand>
</feature>
<feature type="binding site" evidence="1">
    <location>
        <begin position="229"/>
        <end position="233"/>
    </location>
    <ligand>
        <name>GTP</name>
        <dbReference type="ChEBI" id="CHEBI:37565"/>
        <label>2</label>
    </ligand>
</feature>
<feature type="binding site" evidence="1">
    <location>
        <begin position="294"/>
        <end position="297"/>
    </location>
    <ligand>
        <name>GTP</name>
        <dbReference type="ChEBI" id="CHEBI:37565"/>
        <label>2</label>
    </ligand>
</feature>
<proteinExistence type="inferred from homology"/>
<comment type="function">
    <text evidence="1">GTPase that plays an essential role in the late steps of ribosome biogenesis.</text>
</comment>
<comment type="subunit">
    <text evidence="1">Associates with the 50S ribosomal subunit.</text>
</comment>
<comment type="similarity">
    <text evidence="1">Belongs to the TRAFAC class TrmE-Era-EngA-EngB-Septin-like GTPase superfamily. EngA (Der) GTPase family.</text>
</comment>
<dbReference type="EMBL" id="BA000028">
    <property type="protein sequence ID" value="BAC13753.1"/>
    <property type="molecule type" value="Genomic_DNA"/>
</dbReference>
<dbReference type="RefSeq" id="WP_011066195.1">
    <property type="nucleotide sequence ID" value="NC_004193.1"/>
</dbReference>
<dbReference type="SMR" id="Q8EQA8"/>
<dbReference type="STRING" id="221109.gene:10734037"/>
<dbReference type="KEGG" id="oih:OB1797"/>
<dbReference type="eggNOG" id="COG1160">
    <property type="taxonomic scope" value="Bacteria"/>
</dbReference>
<dbReference type="HOGENOM" id="CLU_016077_6_2_9"/>
<dbReference type="OrthoDB" id="9805918at2"/>
<dbReference type="PhylomeDB" id="Q8EQA8"/>
<dbReference type="Proteomes" id="UP000000822">
    <property type="component" value="Chromosome"/>
</dbReference>
<dbReference type="GO" id="GO:0005525">
    <property type="term" value="F:GTP binding"/>
    <property type="evidence" value="ECO:0007669"/>
    <property type="project" value="UniProtKB-UniRule"/>
</dbReference>
<dbReference type="GO" id="GO:0043022">
    <property type="term" value="F:ribosome binding"/>
    <property type="evidence" value="ECO:0007669"/>
    <property type="project" value="TreeGrafter"/>
</dbReference>
<dbReference type="GO" id="GO:0042254">
    <property type="term" value="P:ribosome biogenesis"/>
    <property type="evidence" value="ECO:0007669"/>
    <property type="project" value="UniProtKB-KW"/>
</dbReference>
<dbReference type="CDD" id="cd01894">
    <property type="entry name" value="EngA1"/>
    <property type="match status" value="1"/>
</dbReference>
<dbReference type="CDD" id="cd01895">
    <property type="entry name" value="EngA2"/>
    <property type="match status" value="1"/>
</dbReference>
<dbReference type="FunFam" id="3.30.300.20:FF:000004">
    <property type="entry name" value="GTPase Der"/>
    <property type="match status" value="1"/>
</dbReference>
<dbReference type="FunFam" id="3.40.50.300:FF:000040">
    <property type="entry name" value="GTPase Der"/>
    <property type="match status" value="1"/>
</dbReference>
<dbReference type="FunFam" id="3.40.50.300:FF:000057">
    <property type="entry name" value="GTPase Der"/>
    <property type="match status" value="1"/>
</dbReference>
<dbReference type="Gene3D" id="3.30.300.20">
    <property type="match status" value="1"/>
</dbReference>
<dbReference type="Gene3D" id="3.40.50.300">
    <property type="entry name" value="P-loop containing nucleotide triphosphate hydrolases"/>
    <property type="match status" value="2"/>
</dbReference>
<dbReference type="HAMAP" id="MF_00195">
    <property type="entry name" value="GTPase_Der"/>
    <property type="match status" value="1"/>
</dbReference>
<dbReference type="InterPro" id="IPR031166">
    <property type="entry name" value="G_ENGA"/>
</dbReference>
<dbReference type="InterPro" id="IPR006073">
    <property type="entry name" value="GTP-bd"/>
</dbReference>
<dbReference type="InterPro" id="IPR016484">
    <property type="entry name" value="GTPase_Der"/>
</dbReference>
<dbReference type="InterPro" id="IPR032859">
    <property type="entry name" value="KH_dom-like"/>
</dbReference>
<dbReference type="InterPro" id="IPR015946">
    <property type="entry name" value="KH_dom-like_a/b"/>
</dbReference>
<dbReference type="InterPro" id="IPR027417">
    <property type="entry name" value="P-loop_NTPase"/>
</dbReference>
<dbReference type="InterPro" id="IPR005225">
    <property type="entry name" value="Small_GTP-bd"/>
</dbReference>
<dbReference type="NCBIfam" id="TIGR03594">
    <property type="entry name" value="GTPase_EngA"/>
    <property type="match status" value="1"/>
</dbReference>
<dbReference type="NCBIfam" id="TIGR00231">
    <property type="entry name" value="small_GTP"/>
    <property type="match status" value="2"/>
</dbReference>
<dbReference type="PANTHER" id="PTHR43834">
    <property type="entry name" value="GTPASE DER"/>
    <property type="match status" value="1"/>
</dbReference>
<dbReference type="PANTHER" id="PTHR43834:SF6">
    <property type="entry name" value="GTPASE DER"/>
    <property type="match status" value="1"/>
</dbReference>
<dbReference type="Pfam" id="PF14714">
    <property type="entry name" value="KH_dom-like"/>
    <property type="match status" value="1"/>
</dbReference>
<dbReference type="Pfam" id="PF01926">
    <property type="entry name" value="MMR_HSR1"/>
    <property type="match status" value="2"/>
</dbReference>
<dbReference type="PIRSF" id="PIRSF006485">
    <property type="entry name" value="GTP-binding_EngA"/>
    <property type="match status" value="1"/>
</dbReference>
<dbReference type="PRINTS" id="PR00326">
    <property type="entry name" value="GTP1OBG"/>
</dbReference>
<dbReference type="SUPFAM" id="SSF52540">
    <property type="entry name" value="P-loop containing nucleoside triphosphate hydrolases"/>
    <property type="match status" value="2"/>
</dbReference>
<dbReference type="PROSITE" id="PS51712">
    <property type="entry name" value="G_ENGA"/>
    <property type="match status" value="2"/>
</dbReference>
<sequence>MRKSVVAIVGRPNVGKSTIFNRLVGERISIVEDIPGVTRDRIYANAEWLNHTFNIIDTGGIELGDEPLLVQMRQQAEIAIDEADVIVFLLNGKEGITSADDEVAKLLFKSNKPVVVGVNKMDNPQMHETIYEYYSLGFGQPFPISGTHGLGLGDLLDEVVGHFPNESEEEKDEDTIYFSLIGRPNVGKSSLVNALLNEDRVIVSEIEGTTRDAIDTKLHRDDQDFVIIDTAGMRKRGKVYESTEKYSVLRALRAIERSDVVLVLIDAETGIREQDKRIAGYAHDAGRAIVIVVNKWDTVDSNEKAMKEFEKNIRAHFQYLDYAPVVFLSAKTKKRMHTLVPAIKLASESHTKRIPTNVLNDVIMDAIAMNPTPTLKGKRLKVLYATQVAVQPPSFVVFVNDPELMHFSYERFLENKIRDAFGFVGTPIKLFARRRQ</sequence>
<protein>
    <recommendedName>
        <fullName evidence="1">GTPase Der</fullName>
    </recommendedName>
    <alternativeName>
        <fullName evidence="1">GTP-binding protein EngA</fullName>
    </alternativeName>
</protein>